<gene>
    <name type="primary">sh3bp4-b</name>
</gene>
<protein>
    <recommendedName>
        <fullName>SH3 domain-binding protein 4-B</fullName>
    </recommendedName>
</protein>
<accession>Q6NU51</accession>
<name>SH34B_XENLA</name>
<proteinExistence type="evidence at transcript level"/>
<comment type="function">
    <text evidence="1">Possible role in regulating endocytosis of the transferrin receptor at the plasma membrane. Alternatively, may function as a negative regulator of the amino acid-induced TOR signaling by inhibiting the formation of active Rag GTPase complexes. Preferentially binds inactive Rag GTPase complexes and prevents their interaction with the mTORC1 complex inhibiting its relocalization to lysosomes and its activation. Thereby, may indirectly regulate cell growth, proliferation and autophagy (By similarity).</text>
</comment>
<comment type="subunit">
    <text evidence="1">Homodimer or homooligomer.</text>
</comment>
<comment type="subcellular location">
    <subcellularLocation>
        <location evidence="1">Membrane</location>
        <location evidence="1">Clathrin-coated pit</location>
    </subcellularLocation>
    <subcellularLocation>
        <location evidence="1">Cytoplasmic vesicle</location>
        <location evidence="1">Clathrin-coated vesicle</location>
    </subcellularLocation>
    <subcellularLocation>
        <location evidence="1">Nucleus</location>
    </subcellularLocation>
    <text evidence="1">Specifically associated with transferrin receptor-containing clathrin-coated pits and clathrin-coated vesicles. May also localize to the nucleus (By similarity).</text>
</comment>
<comment type="domain">
    <text evidence="1">The SH3 domain mediates localization to the clathrin-coated pits and vesicles.</text>
</comment>
<keyword id="KW-0168">Coated pit</keyword>
<keyword id="KW-0968">Cytoplasmic vesicle</keyword>
<keyword id="KW-0254">Endocytosis</keyword>
<keyword id="KW-0472">Membrane</keyword>
<keyword id="KW-0539">Nucleus</keyword>
<keyword id="KW-1185">Reference proteome</keyword>
<keyword id="KW-0677">Repeat</keyword>
<keyword id="KW-0728">SH3 domain</keyword>
<feature type="chain" id="PRO_0000274580" description="SH3 domain-binding protein 4-B">
    <location>
        <begin position="1"/>
        <end position="957"/>
    </location>
</feature>
<feature type="domain" description="SH3 1" evidence="2">
    <location>
        <begin position="54"/>
        <end position="113"/>
    </location>
</feature>
<feature type="domain" description="ZU5" evidence="3">
    <location>
        <begin position="312"/>
        <end position="449"/>
    </location>
</feature>
<feature type="domain" description="SH3 2" evidence="2">
    <location>
        <begin position="649"/>
        <end position="719"/>
    </location>
</feature>
<reference key="1">
    <citation type="submission" date="2004-04" db="EMBL/GenBank/DDBJ databases">
        <authorList>
            <consortium name="NIH - Xenopus Gene Collection (XGC) project"/>
        </authorList>
    </citation>
    <scope>NUCLEOTIDE SEQUENCE [LARGE SCALE MRNA]</scope>
    <source>
        <tissue>Embryo</tissue>
    </source>
</reference>
<dbReference type="EMBL" id="BC068750">
    <property type="protein sequence ID" value="AAH68750.1"/>
    <property type="molecule type" value="mRNA"/>
</dbReference>
<dbReference type="RefSeq" id="NP_001084680.1">
    <property type="nucleotide sequence ID" value="NM_001091211.1"/>
</dbReference>
<dbReference type="SMR" id="Q6NU51"/>
<dbReference type="DNASU" id="414640"/>
<dbReference type="GeneID" id="414640"/>
<dbReference type="KEGG" id="xla:414640"/>
<dbReference type="AGR" id="Xenbase:XB-GENE-970863"/>
<dbReference type="CTD" id="414640"/>
<dbReference type="Xenbase" id="XB-GENE-970863">
    <property type="gene designation" value="sh3bp4.L"/>
</dbReference>
<dbReference type="OMA" id="RQNKSHY"/>
<dbReference type="OrthoDB" id="10000126at2759"/>
<dbReference type="Proteomes" id="UP000186698">
    <property type="component" value="Chromosome 9_10L"/>
</dbReference>
<dbReference type="Bgee" id="414640">
    <property type="expression patterns" value="Expressed in pancreas and 19 other cell types or tissues"/>
</dbReference>
<dbReference type="GO" id="GO:0005905">
    <property type="term" value="C:clathrin-coated pit"/>
    <property type="evidence" value="ECO:0007669"/>
    <property type="project" value="UniProtKB-SubCell"/>
</dbReference>
<dbReference type="GO" id="GO:0030136">
    <property type="term" value="C:clathrin-coated vesicle"/>
    <property type="evidence" value="ECO:0007669"/>
    <property type="project" value="UniProtKB-SubCell"/>
</dbReference>
<dbReference type="GO" id="GO:0005737">
    <property type="term" value="C:cytoplasm"/>
    <property type="evidence" value="ECO:0000250"/>
    <property type="project" value="UniProtKB"/>
</dbReference>
<dbReference type="GO" id="GO:0005634">
    <property type="term" value="C:nucleus"/>
    <property type="evidence" value="ECO:0007669"/>
    <property type="project" value="UniProtKB-SubCell"/>
</dbReference>
<dbReference type="GO" id="GO:0005092">
    <property type="term" value="F:GDP-dissociation inhibitor activity"/>
    <property type="evidence" value="ECO:0000250"/>
    <property type="project" value="UniProtKB"/>
</dbReference>
<dbReference type="GO" id="GO:0071230">
    <property type="term" value="P:cellular response to amino acid stimulus"/>
    <property type="evidence" value="ECO:0000250"/>
    <property type="project" value="UniProtKB"/>
</dbReference>
<dbReference type="GO" id="GO:0006897">
    <property type="term" value="P:endocytosis"/>
    <property type="evidence" value="ECO:0007669"/>
    <property type="project" value="UniProtKB-KW"/>
</dbReference>
<dbReference type="GO" id="GO:0030308">
    <property type="term" value="P:negative regulation of cell growth"/>
    <property type="evidence" value="ECO:0000250"/>
    <property type="project" value="UniProtKB"/>
</dbReference>
<dbReference type="GO" id="GO:0008285">
    <property type="term" value="P:negative regulation of cell population proliferation"/>
    <property type="evidence" value="ECO:0000250"/>
    <property type="project" value="UniProtKB"/>
</dbReference>
<dbReference type="GO" id="GO:0034260">
    <property type="term" value="P:negative regulation of GTPase activity"/>
    <property type="evidence" value="ECO:0000250"/>
    <property type="project" value="UniProtKB"/>
</dbReference>
<dbReference type="GO" id="GO:0032007">
    <property type="term" value="P:negative regulation of TOR signaling"/>
    <property type="evidence" value="ECO:0000250"/>
    <property type="project" value="UniProtKB"/>
</dbReference>
<dbReference type="GO" id="GO:0010508">
    <property type="term" value="P:positive regulation of autophagy"/>
    <property type="evidence" value="ECO:0000250"/>
    <property type="project" value="UniProtKB"/>
</dbReference>
<dbReference type="GO" id="GO:0061462">
    <property type="term" value="P:protein localization to lysosome"/>
    <property type="evidence" value="ECO:0000250"/>
    <property type="project" value="UniProtKB"/>
</dbReference>
<dbReference type="GO" id="GO:0050790">
    <property type="term" value="P:regulation of catalytic activity"/>
    <property type="evidence" value="ECO:0000250"/>
    <property type="project" value="UniProtKB"/>
</dbReference>
<dbReference type="CDD" id="cd11757">
    <property type="entry name" value="SH3_SH3BP4"/>
    <property type="match status" value="1"/>
</dbReference>
<dbReference type="FunFam" id="2.30.30.40:FF:000117">
    <property type="entry name" value="SH3 domain-binding protein 4"/>
    <property type="match status" value="1"/>
</dbReference>
<dbReference type="FunFam" id="2.60.220.30:FF:000008">
    <property type="entry name" value="SH3 domain-binding protein 4"/>
    <property type="match status" value="1"/>
</dbReference>
<dbReference type="Gene3D" id="2.60.220.30">
    <property type="match status" value="1"/>
</dbReference>
<dbReference type="Gene3D" id="2.30.30.40">
    <property type="entry name" value="SH3 Domains"/>
    <property type="match status" value="1"/>
</dbReference>
<dbReference type="InterPro" id="IPR056183">
    <property type="entry name" value="DEATH_SH3BP4"/>
</dbReference>
<dbReference type="InterPro" id="IPR036028">
    <property type="entry name" value="SH3-like_dom_sf"/>
</dbReference>
<dbReference type="InterPro" id="IPR001452">
    <property type="entry name" value="SH3_domain"/>
</dbReference>
<dbReference type="InterPro" id="IPR056181">
    <property type="entry name" value="SH3BP4_C"/>
</dbReference>
<dbReference type="InterPro" id="IPR035456">
    <property type="entry name" value="SH3BP4_SH3"/>
</dbReference>
<dbReference type="InterPro" id="IPR056182">
    <property type="entry name" value="UPA_SH3BP4"/>
</dbReference>
<dbReference type="InterPro" id="IPR000906">
    <property type="entry name" value="ZU5_dom"/>
</dbReference>
<dbReference type="PANTHER" id="PTHR15603:SF3">
    <property type="entry name" value="SH3 DOMAIN-BINDING PROTEIN 4"/>
    <property type="match status" value="1"/>
</dbReference>
<dbReference type="PANTHER" id="PTHR15603">
    <property type="entry name" value="SH3 DOMAIN-CONTAINING PROTEIN"/>
    <property type="match status" value="1"/>
</dbReference>
<dbReference type="Pfam" id="PF24094">
    <property type="entry name" value="DEATH_SH3BP4"/>
    <property type="match status" value="1"/>
</dbReference>
<dbReference type="Pfam" id="PF00018">
    <property type="entry name" value="SH3_1"/>
    <property type="match status" value="1"/>
</dbReference>
<dbReference type="Pfam" id="PF07653">
    <property type="entry name" value="SH3_2"/>
    <property type="match status" value="1"/>
</dbReference>
<dbReference type="Pfam" id="PF23637">
    <property type="entry name" value="SH3BP4_C"/>
    <property type="match status" value="1"/>
</dbReference>
<dbReference type="Pfam" id="PF23640">
    <property type="entry name" value="UPA_SH3BP4"/>
    <property type="match status" value="1"/>
</dbReference>
<dbReference type="Pfam" id="PF00791">
    <property type="entry name" value="ZU5"/>
    <property type="match status" value="1"/>
</dbReference>
<dbReference type="SMART" id="SM00326">
    <property type="entry name" value="SH3"/>
    <property type="match status" value="2"/>
</dbReference>
<dbReference type="SUPFAM" id="SSF50044">
    <property type="entry name" value="SH3-domain"/>
    <property type="match status" value="1"/>
</dbReference>
<dbReference type="PROSITE" id="PS50002">
    <property type="entry name" value="SH3"/>
    <property type="match status" value="2"/>
</dbReference>
<dbReference type="PROSITE" id="PS51145">
    <property type="entry name" value="ZU5"/>
    <property type="match status" value="1"/>
</dbReference>
<evidence type="ECO:0000250" key="1"/>
<evidence type="ECO:0000255" key="2">
    <source>
        <dbReference type="PROSITE-ProRule" id="PRU00192"/>
    </source>
</evidence>
<evidence type="ECO:0000255" key="3">
    <source>
        <dbReference type="PROSITE-ProRule" id="PRU00485"/>
    </source>
</evidence>
<organism>
    <name type="scientific">Xenopus laevis</name>
    <name type="common">African clawed frog</name>
    <dbReference type="NCBI Taxonomy" id="8355"/>
    <lineage>
        <taxon>Eukaryota</taxon>
        <taxon>Metazoa</taxon>
        <taxon>Chordata</taxon>
        <taxon>Craniata</taxon>
        <taxon>Vertebrata</taxon>
        <taxon>Euteleostomi</taxon>
        <taxon>Amphibia</taxon>
        <taxon>Batrachia</taxon>
        <taxon>Anura</taxon>
        <taxon>Pipoidea</taxon>
        <taxon>Pipidae</taxon>
        <taxon>Xenopodinae</taxon>
        <taxon>Xenopus</taxon>
        <taxon>Xenopus</taxon>
    </lineage>
</organism>
<sequence length="957" mass="106447">MAAQKIRSANTNGLPRCKSEGALIDFSGVPDPSLSEVKVLSPSSLRIDNPASLENVKEVVAIKDYCPNNFTTLKFSKGEHLYVLDASGGDWWYAHNTTEMGYIPSSYVQPLNYRDSCLSDSGMIDGLLESVDEGVKELDLLGDWTNSSNQDSVKKCHNNPFLRPSVSNPFLNGPLVPQTHTADTENSVDLLLFDPLAPSHAIASETSTDVLLDLLPNTSQNEVTVPVKRDNPFFRSKRSYSLSELSVLQAKSESPTTGSFFAGLKSPAPEQFQSREDFRTAWLNHRKLARSCHDLDLLGQNPGWGQTQPVETSIVCRLDSSGGAVQLPDTSISILVPEKHVASGETQQISLKALLDPPLELNNDKCTTVSPVLEIKLSNMDVQSPLTLEVRISVALGGNASALNMVGIKCLRSDAKEGPYNSVTQIYMYGDTVQVKLDNLEPVMYVVMVAQGQGIVSPSSVWEYINKKVTVGLYGPKHIHPSFKAVIVIFGHDCAPKSLLVNEVGQQANKSAPVTLQLWGKQQFVLPKPQDLQLCLFSNMTNYRVDAGDQGKMVRGFQLKLGKVSRLIFPITCQDSAQLSDFTLRVQVRDEAGGVLSQYCVQTPQPPPKTGSKSTGPRRFLKKKEVGKIVLSPLALTYKYPTFQDRPVTSLKYGKLIKTVVRQSKNPYLLEYKKGDVIGLLSEEKIRLKGQLWNKEWYIGYYQGKLGLVHAKNVLVVGKVKPSFFSGPELTTGLLLEQILRPCKFLTYIYASVRTLLMENIGSWRCFADALGYGNLPLSYFCRVELESETERVASVLEKLKEECNSEGKEKKSFQKELIMALLKIDCQGLVVRLIQDFVLLTTAVEVASRWRELAEKLARVSKQQMEGYEAPHRDRNGMLDSEAMWKPAYDFLLTWSAQIGESYRDVIQELHTGLDKMRSPITKRWKHLTGTLIFVNSLDILRAAAFSTQEPEDCII</sequence>